<dbReference type="EMBL" id="CP000419">
    <property type="protein sequence ID" value="ABJ66139.1"/>
    <property type="molecule type" value="Genomic_DNA"/>
</dbReference>
<dbReference type="RefSeq" id="WP_002950594.1">
    <property type="nucleotide sequence ID" value="NZ_CP086001.1"/>
</dbReference>
<dbReference type="SMR" id="Q03KY3"/>
<dbReference type="KEGG" id="ste:STER_0914"/>
<dbReference type="HOGENOM" id="CLU_129218_1_0_9"/>
<dbReference type="Gene3D" id="1.10.10.10">
    <property type="entry name" value="Winged helix-like DNA-binding domain superfamily/Winged helix DNA-binding domain"/>
    <property type="match status" value="1"/>
</dbReference>
<dbReference type="HAMAP" id="MF_00245">
    <property type="entry name" value="UPF0122"/>
    <property type="match status" value="1"/>
</dbReference>
<dbReference type="InterPro" id="IPR013324">
    <property type="entry name" value="RNA_pol_sigma_r3/r4-like"/>
</dbReference>
<dbReference type="InterPro" id="IPR007394">
    <property type="entry name" value="UPF0122"/>
</dbReference>
<dbReference type="InterPro" id="IPR054831">
    <property type="entry name" value="UPF0122_fam_protein"/>
</dbReference>
<dbReference type="InterPro" id="IPR036388">
    <property type="entry name" value="WH-like_DNA-bd_sf"/>
</dbReference>
<dbReference type="NCBIfam" id="NF001066">
    <property type="entry name" value="PRK00118.1-1"/>
    <property type="match status" value="1"/>
</dbReference>
<dbReference type="NCBIfam" id="NF001068">
    <property type="entry name" value="PRK00118.1-4"/>
    <property type="match status" value="1"/>
</dbReference>
<dbReference type="NCBIfam" id="NF001070">
    <property type="entry name" value="PRK00118.1-6"/>
    <property type="match status" value="1"/>
</dbReference>
<dbReference type="NCBIfam" id="NF045758">
    <property type="entry name" value="YlxM"/>
    <property type="match status" value="1"/>
</dbReference>
<dbReference type="PANTHER" id="PTHR40083">
    <property type="entry name" value="UPF0122 PROTEIN CBO2450/CLC_2298"/>
    <property type="match status" value="1"/>
</dbReference>
<dbReference type="PANTHER" id="PTHR40083:SF1">
    <property type="entry name" value="UPF0122 PROTEIN YLXM"/>
    <property type="match status" value="1"/>
</dbReference>
<dbReference type="Pfam" id="PF04297">
    <property type="entry name" value="UPF0122"/>
    <property type="match status" value="1"/>
</dbReference>
<dbReference type="SUPFAM" id="SSF88659">
    <property type="entry name" value="Sigma3 and sigma4 domains of RNA polymerase sigma factors"/>
    <property type="match status" value="1"/>
</dbReference>
<protein>
    <recommendedName>
        <fullName evidence="1">UPF0122 protein STER_0914</fullName>
    </recommendedName>
</protein>
<proteinExistence type="inferred from homology"/>
<name>Y914_STRTD</name>
<accession>Q03KY3</accession>
<evidence type="ECO:0000255" key="1">
    <source>
        <dbReference type="HAMAP-Rule" id="MF_00245"/>
    </source>
</evidence>
<reference key="1">
    <citation type="journal article" date="2006" name="Proc. Natl. Acad. Sci. U.S.A.">
        <title>Comparative genomics of the lactic acid bacteria.</title>
        <authorList>
            <person name="Makarova K.S."/>
            <person name="Slesarev A."/>
            <person name="Wolf Y.I."/>
            <person name="Sorokin A."/>
            <person name="Mirkin B."/>
            <person name="Koonin E.V."/>
            <person name="Pavlov A."/>
            <person name="Pavlova N."/>
            <person name="Karamychev V."/>
            <person name="Polouchine N."/>
            <person name="Shakhova V."/>
            <person name="Grigoriev I."/>
            <person name="Lou Y."/>
            <person name="Rohksar D."/>
            <person name="Lucas S."/>
            <person name="Huang K."/>
            <person name="Goodstein D.M."/>
            <person name="Hawkins T."/>
            <person name="Plengvidhya V."/>
            <person name="Welker D."/>
            <person name="Hughes J."/>
            <person name="Goh Y."/>
            <person name="Benson A."/>
            <person name="Baldwin K."/>
            <person name="Lee J.-H."/>
            <person name="Diaz-Muniz I."/>
            <person name="Dosti B."/>
            <person name="Smeianov V."/>
            <person name="Wechter W."/>
            <person name="Barabote R."/>
            <person name="Lorca G."/>
            <person name="Altermann E."/>
            <person name="Barrangou R."/>
            <person name="Ganesan B."/>
            <person name="Xie Y."/>
            <person name="Rawsthorne H."/>
            <person name="Tamir D."/>
            <person name="Parker C."/>
            <person name="Breidt F."/>
            <person name="Broadbent J.R."/>
            <person name="Hutkins R."/>
            <person name="O'Sullivan D."/>
            <person name="Steele J."/>
            <person name="Unlu G."/>
            <person name="Saier M.H. Jr."/>
            <person name="Klaenhammer T."/>
            <person name="Richardson P."/>
            <person name="Kozyavkin S."/>
            <person name="Weimer B.C."/>
            <person name="Mills D.A."/>
        </authorList>
    </citation>
    <scope>NUCLEOTIDE SEQUENCE [LARGE SCALE GENOMIC DNA]</scope>
    <source>
        <strain>ATCC BAA-491 / LMD-9</strain>
    </source>
</reference>
<sequence length="110" mass="13188">MEIEKTNRMNALFEFYAALLTDKQMNYIELYYADDYSLAEIAEEFGVSRQAVYDNIKRTEKILEDYEMKLHMYSDYIVRSQIFDDIMEKYADDSYLQEQIAILSSIDNRD</sequence>
<comment type="function">
    <text evidence="1">Might take part in the signal recognition particle (SRP) pathway. This is inferred from the conservation of its genetic proximity to ftsY/ffh. May be a regulatory protein.</text>
</comment>
<comment type="similarity">
    <text evidence="1">Belongs to the UPF0122 family.</text>
</comment>
<organism>
    <name type="scientific">Streptococcus thermophilus (strain ATCC BAA-491 / LMD-9)</name>
    <dbReference type="NCBI Taxonomy" id="322159"/>
    <lineage>
        <taxon>Bacteria</taxon>
        <taxon>Bacillati</taxon>
        <taxon>Bacillota</taxon>
        <taxon>Bacilli</taxon>
        <taxon>Lactobacillales</taxon>
        <taxon>Streptococcaceae</taxon>
        <taxon>Streptococcus</taxon>
    </lineage>
</organism>
<feature type="chain" id="PRO_1000012554" description="UPF0122 protein STER_0914">
    <location>
        <begin position="1"/>
        <end position="110"/>
    </location>
</feature>
<gene>
    <name type="ordered locus">STER_0914</name>
</gene>